<comment type="subunit">
    <text evidence="1">Component of the mitochondrial ribosome large subunit (39S) which comprises a 16S rRNA and about 50 distinct proteins.</text>
</comment>
<comment type="subcellular location">
    <subcellularLocation>
        <location evidence="1">Mitochondrion</location>
    </subcellularLocation>
</comment>
<comment type="similarity">
    <text evidence="3">Belongs to the mitochondrion-specific ribosomal protein mL52 family.</text>
</comment>
<sequence>MLQIAKLCLATSGRITAQRYVAVTTARAIDQKWREAKGLPENPNAFGPLTNLPDYTFLDGRPTPLGSNQKKRLERQQEIATKIVELSGELEFAKQRYERQRVAAATEKQRIIQNKLKPKGHLMLKQKK</sequence>
<dbReference type="EMBL" id="CM000071">
    <property type="protein sequence ID" value="EAL25318.2"/>
    <property type="molecule type" value="Genomic_DNA"/>
</dbReference>
<dbReference type="SMR" id="Q290P4"/>
<dbReference type="FunCoup" id="Q290P4">
    <property type="interactions" value="388"/>
</dbReference>
<dbReference type="STRING" id="46245.Q290P4"/>
<dbReference type="eggNOG" id="ENOG502S4I0">
    <property type="taxonomic scope" value="Eukaryota"/>
</dbReference>
<dbReference type="HOGENOM" id="CLU_135844_1_0_1"/>
<dbReference type="InParanoid" id="Q290P4"/>
<dbReference type="OMA" id="RSIDQKW"/>
<dbReference type="Proteomes" id="UP000001819">
    <property type="component" value="Unplaced"/>
</dbReference>
<dbReference type="GO" id="GO:0005762">
    <property type="term" value="C:mitochondrial large ribosomal subunit"/>
    <property type="evidence" value="ECO:0000250"/>
    <property type="project" value="UniProtKB"/>
</dbReference>
<dbReference type="GO" id="GO:0003735">
    <property type="term" value="F:structural constituent of ribosome"/>
    <property type="evidence" value="ECO:0000250"/>
    <property type="project" value="UniProtKB"/>
</dbReference>
<dbReference type="GO" id="GO:0032543">
    <property type="term" value="P:mitochondrial translation"/>
    <property type="evidence" value="ECO:0007669"/>
    <property type="project" value="InterPro"/>
</dbReference>
<dbReference type="GO" id="GO:0006412">
    <property type="term" value="P:translation"/>
    <property type="evidence" value="ECO:0000250"/>
    <property type="project" value="UniProtKB"/>
</dbReference>
<dbReference type="InterPro" id="IPR034596">
    <property type="entry name" value="Ribosomal_mL52"/>
</dbReference>
<dbReference type="PANTHER" id="PTHR34090">
    <property type="entry name" value="39S RIBOSOMAL PROTEIN L52, MITOCHONDRIAL"/>
    <property type="match status" value="1"/>
</dbReference>
<dbReference type="PANTHER" id="PTHR34090:SF1">
    <property type="entry name" value="LARGE RIBOSOMAL SUBUNIT PROTEIN ML52"/>
    <property type="match status" value="1"/>
</dbReference>
<dbReference type="Pfam" id="PF18699">
    <property type="entry name" value="MRPL52"/>
    <property type="match status" value="1"/>
</dbReference>
<name>RM52_DROPS</name>
<reference key="1">
    <citation type="journal article" date="2005" name="Genome Res.">
        <title>Comparative genome sequencing of Drosophila pseudoobscura: chromosomal, gene, and cis-element evolution.</title>
        <authorList>
            <person name="Richards S."/>
            <person name="Liu Y."/>
            <person name="Bettencourt B.R."/>
            <person name="Hradecky P."/>
            <person name="Letovsky S."/>
            <person name="Nielsen R."/>
            <person name="Thornton K."/>
            <person name="Hubisz M.J."/>
            <person name="Chen R."/>
            <person name="Meisel R.P."/>
            <person name="Couronne O."/>
            <person name="Hua S."/>
            <person name="Smith M.A."/>
            <person name="Zhang P."/>
            <person name="Liu J."/>
            <person name="Bussemaker H.J."/>
            <person name="van Batenburg M.F."/>
            <person name="Howells S.L."/>
            <person name="Scherer S.E."/>
            <person name="Sodergren E."/>
            <person name="Matthews B.B."/>
            <person name="Crosby M.A."/>
            <person name="Schroeder A.J."/>
            <person name="Ortiz-Barrientos D."/>
            <person name="Rives C.M."/>
            <person name="Metzker M.L."/>
            <person name="Muzny D.M."/>
            <person name="Scott G."/>
            <person name="Steffen D."/>
            <person name="Wheeler D.A."/>
            <person name="Worley K.C."/>
            <person name="Havlak P."/>
            <person name="Durbin K.J."/>
            <person name="Egan A."/>
            <person name="Gill R."/>
            <person name="Hume J."/>
            <person name="Morgan M.B."/>
            <person name="Miner G."/>
            <person name="Hamilton C."/>
            <person name="Huang Y."/>
            <person name="Waldron L."/>
            <person name="Verduzco D."/>
            <person name="Clerc-Blankenburg K.P."/>
            <person name="Dubchak I."/>
            <person name="Noor M.A.F."/>
            <person name="Anderson W."/>
            <person name="White K.P."/>
            <person name="Clark A.G."/>
            <person name="Schaeffer S.W."/>
            <person name="Gelbart W.M."/>
            <person name="Weinstock G.M."/>
            <person name="Gibbs R.A."/>
        </authorList>
    </citation>
    <scope>NUCLEOTIDE SEQUENCE [LARGE SCALE GENOMIC DNA]</scope>
    <source>
        <strain>MV2-25 / Tucson 14011-0121.94</strain>
    </source>
</reference>
<gene>
    <name type="primary">mRpL52</name>
    <name type="ORF">GA13944</name>
</gene>
<protein>
    <recommendedName>
        <fullName evidence="3">Large ribosomal subunit protein mL52</fullName>
    </recommendedName>
    <alternativeName>
        <fullName>39S ribosomal protein L52, mitochondrial</fullName>
        <shortName>L52mt</shortName>
        <shortName>MRP-L52</shortName>
    </alternativeName>
</protein>
<keyword id="KW-0496">Mitochondrion</keyword>
<keyword id="KW-1185">Reference proteome</keyword>
<keyword id="KW-0687">Ribonucleoprotein</keyword>
<keyword id="KW-0689">Ribosomal protein</keyword>
<keyword id="KW-0809">Transit peptide</keyword>
<organism>
    <name type="scientific">Drosophila pseudoobscura pseudoobscura</name>
    <name type="common">Fruit fly</name>
    <dbReference type="NCBI Taxonomy" id="46245"/>
    <lineage>
        <taxon>Eukaryota</taxon>
        <taxon>Metazoa</taxon>
        <taxon>Ecdysozoa</taxon>
        <taxon>Arthropoda</taxon>
        <taxon>Hexapoda</taxon>
        <taxon>Insecta</taxon>
        <taxon>Pterygota</taxon>
        <taxon>Neoptera</taxon>
        <taxon>Endopterygota</taxon>
        <taxon>Diptera</taxon>
        <taxon>Brachycera</taxon>
        <taxon>Muscomorpha</taxon>
        <taxon>Ephydroidea</taxon>
        <taxon>Drosophilidae</taxon>
        <taxon>Drosophila</taxon>
        <taxon>Sophophora</taxon>
    </lineage>
</organism>
<feature type="transit peptide" description="Mitochondrion" evidence="2">
    <location>
        <begin position="1"/>
        <end position="28"/>
    </location>
</feature>
<feature type="chain" id="PRO_0000273097" description="Large ribosomal subunit protein mL52">
    <location>
        <begin position="29"/>
        <end position="128"/>
    </location>
</feature>
<accession>Q290P4</accession>
<proteinExistence type="inferred from homology"/>
<evidence type="ECO:0000250" key="1">
    <source>
        <dbReference type="UniProtKB" id="Q86TS9"/>
    </source>
</evidence>
<evidence type="ECO:0000255" key="2"/>
<evidence type="ECO:0000305" key="3"/>